<sequence length="688" mass="72859">MTRKQRAIFEPALVRTALLDAVKKLDPRVQWRNPVMFVVYLGSGLTTLIWLAILSGQTTGSALFTGSVALWLWFTVLFANFAEALAEGRSKAQAESLRGVKKTSWAKKLSEARFDAPQEKVSADSLRKGDVVLIEAGDTVPCDGEVLEGGASVDESAITGESAPVIRESGGDFSSVTGGTRVLSDWLVVECSVNPGETFLDRMIAMVEGAKRRKTPNEVALTILLVALTIVFLLATATLYPFSVFSVEANQAGSPVTITVLVALLVCLIPTTIGGLLSAIGVAGMSRMLGANVIATSGRAVEAAGDVDVLLLDKTGTITLGNRQASEFLPAPGVTEQQLADAAQLSSLADETPEGRSIVVLAKQRFNLRERDLHSLNATFVPFSAQTRMSGVNVQDRMIRKGAVDAIRRHVESNQGHFPRAVEDAVESVARTGGTPLVVADGPRVLGVVALKDIVKGGIKERFAELRKMGIKTVMITGDNRLTAAAIAAEAGVDDFLAEATPEAKLALIRQYQAEGRLVAMTGDGTNDAPALAQADVAVAMNSGTQAAKEAGNMVDLDSNPTKLIEVVHIGKQMLMTRGSLTTFSIANDVAKYFAIIPAAFAATYPQLNALNVMQLHSPASAILSAVIFNALIIVFLIPLALKGVSYKAMSAAALLRRNLWIYGLGGLLVPFVGIKLIDLVLAALIMS</sequence>
<dbReference type="EC" id="7.2.2.6" evidence="1"/>
<dbReference type="EMBL" id="AM286415">
    <property type="protein sequence ID" value="CAL13000.1"/>
    <property type="molecule type" value="Genomic_DNA"/>
</dbReference>
<dbReference type="RefSeq" id="WP_011816820.1">
    <property type="nucleotide sequence ID" value="NC_008800.1"/>
</dbReference>
<dbReference type="RefSeq" id="YP_001007150.1">
    <property type="nucleotide sequence ID" value="NC_008800.1"/>
</dbReference>
<dbReference type="SMR" id="A1JQS2"/>
<dbReference type="KEGG" id="yen:YE2961"/>
<dbReference type="PATRIC" id="fig|393305.7.peg.3151"/>
<dbReference type="eggNOG" id="COG2216">
    <property type="taxonomic scope" value="Bacteria"/>
</dbReference>
<dbReference type="HOGENOM" id="CLU_025728_2_0_6"/>
<dbReference type="OrthoDB" id="9814270at2"/>
<dbReference type="Proteomes" id="UP000000642">
    <property type="component" value="Chromosome"/>
</dbReference>
<dbReference type="GO" id="GO:0005886">
    <property type="term" value="C:plasma membrane"/>
    <property type="evidence" value="ECO:0007669"/>
    <property type="project" value="UniProtKB-SubCell"/>
</dbReference>
<dbReference type="GO" id="GO:0005524">
    <property type="term" value="F:ATP binding"/>
    <property type="evidence" value="ECO:0007669"/>
    <property type="project" value="UniProtKB-UniRule"/>
</dbReference>
<dbReference type="GO" id="GO:0016887">
    <property type="term" value="F:ATP hydrolysis activity"/>
    <property type="evidence" value="ECO:0007669"/>
    <property type="project" value="InterPro"/>
</dbReference>
<dbReference type="GO" id="GO:0000287">
    <property type="term" value="F:magnesium ion binding"/>
    <property type="evidence" value="ECO:0007669"/>
    <property type="project" value="UniProtKB-UniRule"/>
</dbReference>
<dbReference type="GO" id="GO:0008556">
    <property type="term" value="F:P-type potassium transmembrane transporter activity"/>
    <property type="evidence" value="ECO:0007669"/>
    <property type="project" value="UniProtKB-UniRule"/>
</dbReference>
<dbReference type="CDD" id="cd02078">
    <property type="entry name" value="P-type_ATPase_K"/>
    <property type="match status" value="1"/>
</dbReference>
<dbReference type="FunFam" id="2.70.150.10:FF:000010">
    <property type="entry name" value="Potassium-transporting ATPase ATP-binding subunit"/>
    <property type="match status" value="1"/>
</dbReference>
<dbReference type="FunFam" id="3.40.1110.10:FF:000007">
    <property type="entry name" value="Potassium-transporting ATPase ATP-binding subunit"/>
    <property type="match status" value="1"/>
</dbReference>
<dbReference type="Gene3D" id="3.40.1110.10">
    <property type="entry name" value="Calcium-transporting ATPase, cytoplasmic domain N"/>
    <property type="match status" value="1"/>
</dbReference>
<dbReference type="Gene3D" id="2.70.150.10">
    <property type="entry name" value="Calcium-transporting ATPase, cytoplasmic transduction domain A"/>
    <property type="match status" value="1"/>
</dbReference>
<dbReference type="Gene3D" id="3.40.50.1000">
    <property type="entry name" value="HAD superfamily/HAD-like"/>
    <property type="match status" value="1"/>
</dbReference>
<dbReference type="HAMAP" id="MF_00285">
    <property type="entry name" value="KdpB"/>
    <property type="match status" value="1"/>
</dbReference>
<dbReference type="InterPro" id="IPR023299">
    <property type="entry name" value="ATPase_P-typ_cyto_dom_N"/>
</dbReference>
<dbReference type="InterPro" id="IPR018303">
    <property type="entry name" value="ATPase_P-typ_P_site"/>
</dbReference>
<dbReference type="InterPro" id="IPR023298">
    <property type="entry name" value="ATPase_P-typ_TM_dom_sf"/>
</dbReference>
<dbReference type="InterPro" id="IPR008250">
    <property type="entry name" value="ATPase_P-typ_transduc_dom_A_sf"/>
</dbReference>
<dbReference type="InterPro" id="IPR036412">
    <property type="entry name" value="HAD-like_sf"/>
</dbReference>
<dbReference type="InterPro" id="IPR023214">
    <property type="entry name" value="HAD_sf"/>
</dbReference>
<dbReference type="InterPro" id="IPR006391">
    <property type="entry name" value="P-type_ATPase_bsu_IA"/>
</dbReference>
<dbReference type="InterPro" id="IPR001757">
    <property type="entry name" value="P_typ_ATPase"/>
</dbReference>
<dbReference type="InterPro" id="IPR044492">
    <property type="entry name" value="P_typ_ATPase_HD_dom"/>
</dbReference>
<dbReference type="NCBIfam" id="TIGR01494">
    <property type="entry name" value="ATPase_P-type"/>
    <property type="match status" value="2"/>
</dbReference>
<dbReference type="NCBIfam" id="TIGR01497">
    <property type="entry name" value="kdpB"/>
    <property type="match status" value="1"/>
</dbReference>
<dbReference type="PANTHER" id="PTHR43743">
    <property type="entry name" value="POTASSIUM-TRANSPORTING ATPASE ATP-BINDING SUBUNIT"/>
    <property type="match status" value="1"/>
</dbReference>
<dbReference type="PANTHER" id="PTHR43743:SF1">
    <property type="entry name" value="POTASSIUM-TRANSPORTING ATPASE ATP-BINDING SUBUNIT"/>
    <property type="match status" value="1"/>
</dbReference>
<dbReference type="Pfam" id="PF00122">
    <property type="entry name" value="E1-E2_ATPase"/>
    <property type="match status" value="1"/>
</dbReference>
<dbReference type="Pfam" id="PF00702">
    <property type="entry name" value="Hydrolase"/>
    <property type="match status" value="1"/>
</dbReference>
<dbReference type="PRINTS" id="PR00119">
    <property type="entry name" value="CATATPASE"/>
</dbReference>
<dbReference type="SFLD" id="SFLDG00002">
    <property type="entry name" value="C1.7:_P-type_atpase_like"/>
    <property type="match status" value="1"/>
</dbReference>
<dbReference type="SFLD" id="SFLDF00027">
    <property type="entry name" value="p-type_atpase"/>
    <property type="match status" value="1"/>
</dbReference>
<dbReference type="SUPFAM" id="SSF81653">
    <property type="entry name" value="Calcium ATPase, transduction domain A"/>
    <property type="match status" value="1"/>
</dbReference>
<dbReference type="SUPFAM" id="SSF81665">
    <property type="entry name" value="Calcium ATPase, transmembrane domain M"/>
    <property type="match status" value="1"/>
</dbReference>
<dbReference type="SUPFAM" id="SSF56784">
    <property type="entry name" value="HAD-like"/>
    <property type="match status" value="1"/>
</dbReference>
<dbReference type="PROSITE" id="PS00154">
    <property type="entry name" value="ATPASE_E1_E2"/>
    <property type="match status" value="1"/>
</dbReference>
<organism>
    <name type="scientific">Yersinia enterocolitica serotype O:8 / biotype 1B (strain NCTC 13174 / 8081)</name>
    <dbReference type="NCBI Taxonomy" id="393305"/>
    <lineage>
        <taxon>Bacteria</taxon>
        <taxon>Pseudomonadati</taxon>
        <taxon>Pseudomonadota</taxon>
        <taxon>Gammaproteobacteria</taxon>
        <taxon>Enterobacterales</taxon>
        <taxon>Yersiniaceae</taxon>
        <taxon>Yersinia</taxon>
    </lineage>
</organism>
<keyword id="KW-0067">ATP-binding</keyword>
<keyword id="KW-0997">Cell inner membrane</keyword>
<keyword id="KW-1003">Cell membrane</keyword>
<keyword id="KW-0406">Ion transport</keyword>
<keyword id="KW-0460">Magnesium</keyword>
<keyword id="KW-0472">Membrane</keyword>
<keyword id="KW-0479">Metal-binding</keyword>
<keyword id="KW-0547">Nucleotide-binding</keyword>
<keyword id="KW-0597">Phosphoprotein</keyword>
<keyword id="KW-0630">Potassium</keyword>
<keyword id="KW-0633">Potassium transport</keyword>
<keyword id="KW-1278">Translocase</keyword>
<keyword id="KW-0812">Transmembrane</keyword>
<keyword id="KW-1133">Transmembrane helix</keyword>
<keyword id="KW-0813">Transport</keyword>
<gene>
    <name evidence="1" type="primary">kdpB</name>
    <name type="ordered locus">YE2961</name>
</gene>
<proteinExistence type="inferred from homology"/>
<evidence type="ECO:0000255" key="1">
    <source>
        <dbReference type="HAMAP-Rule" id="MF_00285"/>
    </source>
</evidence>
<reference key="1">
    <citation type="journal article" date="2006" name="PLoS Genet.">
        <title>The complete genome sequence and comparative genome analysis of the high pathogenicity Yersinia enterocolitica strain 8081.</title>
        <authorList>
            <person name="Thomson N.R."/>
            <person name="Howard S."/>
            <person name="Wren B.W."/>
            <person name="Holden M.T.G."/>
            <person name="Crossman L."/>
            <person name="Challis G.L."/>
            <person name="Churcher C."/>
            <person name="Mungall K."/>
            <person name="Brooks K."/>
            <person name="Chillingworth T."/>
            <person name="Feltwell T."/>
            <person name="Abdellah Z."/>
            <person name="Hauser H."/>
            <person name="Jagels K."/>
            <person name="Maddison M."/>
            <person name="Moule S."/>
            <person name="Sanders M."/>
            <person name="Whitehead S."/>
            <person name="Quail M.A."/>
            <person name="Dougan G."/>
            <person name="Parkhill J."/>
            <person name="Prentice M.B."/>
        </authorList>
    </citation>
    <scope>NUCLEOTIDE SEQUENCE [LARGE SCALE GENOMIC DNA]</scope>
    <source>
        <strain>NCTC 13174 / 8081</strain>
    </source>
</reference>
<comment type="function">
    <text evidence="1">Part of the high-affinity ATP-driven potassium transport (or Kdp) system, which catalyzes the hydrolysis of ATP coupled with the electrogenic transport of potassium into the cytoplasm. This subunit is responsible for energy coupling to the transport system and for the release of the potassium ions to the cytoplasm.</text>
</comment>
<comment type="catalytic activity">
    <reaction evidence="1">
        <text>K(+)(out) + ATP + H2O = K(+)(in) + ADP + phosphate + H(+)</text>
        <dbReference type="Rhea" id="RHEA:16777"/>
        <dbReference type="ChEBI" id="CHEBI:15377"/>
        <dbReference type="ChEBI" id="CHEBI:15378"/>
        <dbReference type="ChEBI" id="CHEBI:29103"/>
        <dbReference type="ChEBI" id="CHEBI:30616"/>
        <dbReference type="ChEBI" id="CHEBI:43474"/>
        <dbReference type="ChEBI" id="CHEBI:456216"/>
        <dbReference type="EC" id="7.2.2.6"/>
    </reaction>
    <physiologicalReaction direction="left-to-right" evidence="1">
        <dbReference type="Rhea" id="RHEA:16778"/>
    </physiologicalReaction>
</comment>
<comment type="subunit">
    <text evidence="1">The system is composed of three essential subunits: KdpA, KdpB and KdpC.</text>
</comment>
<comment type="subcellular location">
    <subcellularLocation>
        <location evidence="1">Cell inner membrane</location>
        <topology evidence="1">Multi-pass membrane protein</topology>
    </subcellularLocation>
</comment>
<comment type="similarity">
    <text evidence="1">Belongs to the cation transport ATPase (P-type) (TC 3.A.3) family. Type IA subfamily.</text>
</comment>
<feature type="chain" id="PRO_1000022449" description="Potassium-transporting ATPase ATP-binding subunit">
    <location>
        <begin position="1"/>
        <end position="688"/>
    </location>
</feature>
<feature type="transmembrane region" description="Helical" evidence="1">
    <location>
        <begin position="34"/>
        <end position="54"/>
    </location>
</feature>
<feature type="transmembrane region" description="Helical" evidence="1">
    <location>
        <begin position="62"/>
        <end position="82"/>
    </location>
</feature>
<feature type="transmembrane region" description="Helical" evidence="1">
    <location>
        <begin position="219"/>
        <end position="239"/>
    </location>
</feature>
<feature type="transmembrane region" description="Helical" evidence="1">
    <location>
        <begin position="260"/>
        <end position="280"/>
    </location>
</feature>
<feature type="transmembrane region" description="Helical" evidence="1">
    <location>
        <begin position="594"/>
        <end position="614"/>
    </location>
</feature>
<feature type="transmembrane region" description="Helical" evidence="1">
    <location>
        <begin position="622"/>
        <end position="642"/>
    </location>
</feature>
<feature type="transmembrane region" description="Helical" evidence="1">
    <location>
        <begin position="667"/>
        <end position="687"/>
    </location>
</feature>
<feature type="active site" description="4-aspartylphosphate intermediate" evidence="1">
    <location>
        <position position="313"/>
    </location>
</feature>
<feature type="binding site" evidence="1">
    <location>
        <position position="350"/>
    </location>
    <ligand>
        <name>ATP</name>
        <dbReference type="ChEBI" id="CHEBI:30616"/>
    </ligand>
</feature>
<feature type="binding site" evidence="1">
    <location>
        <position position="354"/>
    </location>
    <ligand>
        <name>ATP</name>
        <dbReference type="ChEBI" id="CHEBI:30616"/>
    </ligand>
</feature>
<feature type="binding site" evidence="1">
    <location>
        <begin position="383"/>
        <end position="390"/>
    </location>
    <ligand>
        <name>ATP</name>
        <dbReference type="ChEBI" id="CHEBI:30616"/>
    </ligand>
</feature>
<feature type="binding site" evidence="1">
    <location>
        <position position="401"/>
    </location>
    <ligand>
        <name>ATP</name>
        <dbReference type="ChEBI" id="CHEBI:30616"/>
    </ligand>
</feature>
<feature type="binding site" evidence="1">
    <location>
        <position position="524"/>
    </location>
    <ligand>
        <name>Mg(2+)</name>
        <dbReference type="ChEBI" id="CHEBI:18420"/>
    </ligand>
</feature>
<feature type="binding site" evidence="1">
    <location>
        <position position="528"/>
    </location>
    <ligand>
        <name>Mg(2+)</name>
        <dbReference type="ChEBI" id="CHEBI:18420"/>
    </ligand>
</feature>
<accession>A1JQS2</accession>
<name>KDPB_YERE8</name>
<protein>
    <recommendedName>
        <fullName evidence="1">Potassium-transporting ATPase ATP-binding subunit</fullName>
        <ecNumber evidence="1">7.2.2.6</ecNumber>
    </recommendedName>
    <alternativeName>
        <fullName evidence="1">ATP phosphohydrolase [potassium-transporting] B chain</fullName>
    </alternativeName>
    <alternativeName>
        <fullName evidence="1">Potassium-binding and translocating subunit B</fullName>
    </alternativeName>
    <alternativeName>
        <fullName evidence="1">Potassium-translocating ATPase B chain</fullName>
    </alternativeName>
</protein>